<feature type="signal peptide" evidence="2">
    <location>
        <begin position="1"/>
        <end position="29"/>
    </location>
</feature>
<feature type="chain" id="PRO_0000318688" description="Mucin-like protein 3">
    <location>
        <begin position="30"/>
        <end position="470"/>
    </location>
</feature>
<feature type="topological domain" description="Extracellular" evidence="2">
    <location>
        <begin position="30"/>
        <end position="401"/>
    </location>
</feature>
<feature type="transmembrane region" description="Helical" evidence="2">
    <location>
        <begin position="402"/>
        <end position="422"/>
    </location>
</feature>
<feature type="topological domain" description="Cytoplasmic" evidence="2">
    <location>
        <begin position="423"/>
        <end position="470"/>
    </location>
</feature>
<feature type="region of interest" description="Disordered" evidence="3">
    <location>
        <begin position="57"/>
        <end position="234"/>
    </location>
</feature>
<feature type="region of interest" description="Disordered" evidence="3">
    <location>
        <begin position="248"/>
        <end position="318"/>
    </location>
</feature>
<feature type="compositionally biased region" description="Polar residues" evidence="3">
    <location>
        <begin position="75"/>
        <end position="87"/>
    </location>
</feature>
<feature type="compositionally biased region" description="Basic and acidic residues" evidence="3">
    <location>
        <begin position="132"/>
        <end position="152"/>
    </location>
</feature>
<feature type="compositionally biased region" description="Polar residues" evidence="3">
    <location>
        <begin position="169"/>
        <end position="193"/>
    </location>
</feature>
<feature type="compositionally biased region" description="Basic and acidic residues" evidence="3">
    <location>
        <begin position="194"/>
        <end position="203"/>
    </location>
</feature>
<feature type="compositionally biased region" description="Polar residues" evidence="3">
    <location>
        <begin position="204"/>
        <end position="222"/>
    </location>
</feature>
<feature type="compositionally biased region" description="Basic and acidic residues" evidence="3">
    <location>
        <begin position="260"/>
        <end position="273"/>
    </location>
</feature>
<feature type="compositionally biased region" description="Polar residues" evidence="3">
    <location>
        <begin position="283"/>
        <end position="295"/>
    </location>
</feature>
<feature type="glycosylation site" description="N-linked (GlcNAc...) asparagine" evidence="2">
    <location>
        <position position="122"/>
    </location>
</feature>
<feature type="glycosylation site" description="N-linked (GlcNAc...) asparagine" evidence="2">
    <location>
        <position position="325"/>
    </location>
</feature>
<accession>Q6MG22</accession>
<gene>
    <name evidence="5" type="primary">Mucl3</name>
    <name evidence="5" type="synonym">Dpcr1</name>
</gene>
<organism>
    <name type="scientific">Rattus norvegicus</name>
    <name type="common">Rat</name>
    <dbReference type="NCBI Taxonomy" id="10116"/>
    <lineage>
        <taxon>Eukaryota</taxon>
        <taxon>Metazoa</taxon>
        <taxon>Chordata</taxon>
        <taxon>Craniata</taxon>
        <taxon>Vertebrata</taxon>
        <taxon>Euteleostomi</taxon>
        <taxon>Mammalia</taxon>
        <taxon>Eutheria</taxon>
        <taxon>Euarchontoglires</taxon>
        <taxon>Glires</taxon>
        <taxon>Rodentia</taxon>
        <taxon>Myomorpha</taxon>
        <taxon>Muroidea</taxon>
        <taxon>Muridae</taxon>
        <taxon>Murinae</taxon>
        <taxon>Rattus</taxon>
    </lineage>
</organism>
<keyword id="KW-1003">Cell membrane</keyword>
<keyword id="KW-0963">Cytoplasm</keyword>
<keyword id="KW-0325">Glycoprotein</keyword>
<keyword id="KW-0472">Membrane</keyword>
<keyword id="KW-1185">Reference proteome</keyword>
<keyword id="KW-0732">Signal</keyword>
<keyword id="KW-0812">Transmembrane</keyword>
<keyword id="KW-1133">Transmembrane helix</keyword>
<proteinExistence type="inferred from homology"/>
<evidence type="ECO:0000250" key="1">
    <source>
        <dbReference type="UniProtKB" id="Q3MIW9"/>
    </source>
</evidence>
<evidence type="ECO:0000255" key="2"/>
<evidence type="ECO:0000256" key="3">
    <source>
        <dbReference type="SAM" id="MobiDB-lite"/>
    </source>
</evidence>
<evidence type="ECO:0000305" key="4"/>
<evidence type="ECO:0000312" key="5">
    <source>
        <dbReference type="RGD" id="1303125"/>
    </source>
</evidence>
<dbReference type="EMBL" id="BX883047">
    <property type="protein sequence ID" value="CAE84025.1"/>
    <property type="molecule type" value="Genomic_DNA"/>
</dbReference>
<dbReference type="RefSeq" id="NP_001003965.1">
    <property type="nucleotide sequence ID" value="NM_001003965.1"/>
</dbReference>
<dbReference type="STRING" id="10116.ENSRNOP00000060680"/>
<dbReference type="GlyCosmos" id="Q6MG22">
    <property type="glycosylation" value="2 sites, No reported glycans"/>
</dbReference>
<dbReference type="GlyGen" id="Q6MG22">
    <property type="glycosylation" value="2 sites"/>
</dbReference>
<dbReference type="PhosphoSitePlus" id="Q6MG22"/>
<dbReference type="PaxDb" id="10116-ENSRNOP00000060680"/>
<dbReference type="GeneID" id="406199"/>
<dbReference type="KEGG" id="rno:406199"/>
<dbReference type="AGR" id="RGD:1303125"/>
<dbReference type="CTD" id="135656"/>
<dbReference type="RGD" id="1303125">
    <property type="gene designation" value="Mucl3"/>
</dbReference>
<dbReference type="VEuPathDB" id="HostDB:ENSRNOG00000042287"/>
<dbReference type="eggNOG" id="ENOG502S7U9">
    <property type="taxonomic scope" value="Eukaryota"/>
</dbReference>
<dbReference type="HOGENOM" id="CLU_040657_1_0_1"/>
<dbReference type="InParanoid" id="Q6MG22"/>
<dbReference type="OrthoDB" id="9838476at2759"/>
<dbReference type="PhylomeDB" id="Q6MG22"/>
<dbReference type="PRO" id="PR:Q6MG22"/>
<dbReference type="Proteomes" id="UP000002494">
    <property type="component" value="Chromosome 20"/>
</dbReference>
<dbReference type="Bgee" id="ENSRNOG00000042287">
    <property type="expression patterns" value="Expressed in stomach and 3 other cell types or tissues"/>
</dbReference>
<dbReference type="GO" id="GO:0005737">
    <property type="term" value="C:cytoplasm"/>
    <property type="evidence" value="ECO:0007669"/>
    <property type="project" value="UniProtKB-SubCell"/>
</dbReference>
<dbReference type="GO" id="GO:0005886">
    <property type="term" value="C:plasma membrane"/>
    <property type="evidence" value="ECO:0007669"/>
    <property type="project" value="UniProtKB-SubCell"/>
</dbReference>
<dbReference type="InterPro" id="IPR026623">
    <property type="entry name" value="MUCL3"/>
</dbReference>
<dbReference type="PANTHER" id="PTHR22094">
    <property type="entry name" value="DIFFUSE PANBRONCHIOLITIS CRITICAL REGION GENE 1"/>
    <property type="match status" value="1"/>
</dbReference>
<dbReference type="PANTHER" id="PTHR22094:SF0">
    <property type="entry name" value="MUCIN-LIKE PROTEIN 3"/>
    <property type="match status" value="1"/>
</dbReference>
<reference key="1">
    <citation type="journal article" date="2004" name="Genome Res.">
        <title>The genomic sequence and comparative analysis of the rat major histocompatibility complex.</title>
        <authorList>
            <person name="Hurt P."/>
            <person name="Walter L."/>
            <person name="Sudbrak R."/>
            <person name="Klages S."/>
            <person name="Mueller I."/>
            <person name="Shiina T."/>
            <person name="Inoko H."/>
            <person name="Lehrach H."/>
            <person name="Guenther E."/>
            <person name="Reinhardt R."/>
            <person name="Himmelbauer H."/>
        </authorList>
    </citation>
    <scope>NUCLEOTIDE SEQUENCE [LARGE SCALE GENOMIC DNA]</scope>
    <source>
        <strain>Brown Norway</strain>
    </source>
</reference>
<name>MUCL3_RAT</name>
<sequence>MAQMTSGLYPMFGFFICLLFLPASWEAGANTFQELQKTGEPSIFDHLLPLTPGLTRRALSDHKNSGQHPPDLPKSTATQKPKRQCNTVRLVKPVHKPIDDAKAADYGNTTVGHEPFPASEKNLSSQGKHPMARNERSADDHGSTNSEKRSDGGHSTSAPMRKISCKPVTRTSGTPVSSTETSTKLRTTSQKPETSSHDSDLIRKSTSLPVKSTEVSRTSYRTPRSLGAERHTIPFTSDKSIQLTIEHTKEATRSQSTPTKYERETRSASERISRAHVPPVENHTPSAGETTTQVSAKSTKHTEEATTSTTEKATKAPERPTVNLNTTGLVKAMENTSTAPSPHLHKTETAHQGITGSLTSRMDLRPITSEAHHLQQNTHSLPGGLHSVQEREGSNSFPAWAIVVVILMAVIILLIFLGLIFLVSCASRARHQLTQNSEDAEPEDKGGRNSYPVYLMEQQNLNLNQISSPP</sequence>
<comment type="function">
    <text evidence="1">May modulate NF-kappaB signaling and play a role in cell growth.</text>
</comment>
<comment type="subcellular location">
    <subcellularLocation>
        <location evidence="1">Cell membrane</location>
        <topology evidence="1">Single-pass type I membrane protein</topology>
    </subcellularLocation>
    <subcellularLocation>
        <location evidence="1">Cytoplasm</location>
    </subcellularLocation>
</comment>
<protein>
    <recommendedName>
        <fullName evidence="4">Mucin-like protein 3</fullName>
    </recommendedName>
    <alternativeName>
        <fullName>Diffuse panbronchiolitis critical region protein 1 homolog</fullName>
    </alternativeName>
</protein>